<feature type="chain" id="PRO_1000196249" description="Large ribosomal subunit protein bL9">
    <location>
        <begin position="1"/>
        <end position="149"/>
    </location>
</feature>
<evidence type="ECO:0000255" key="1">
    <source>
        <dbReference type="HAMAP-Rule" id="MF_00503"/>
    </source>
</evidence>
<evidence type="ECO:0000305" key="2"/>
<sequence length="149" mass="15941">MQIILLEKVANLGQLGDVVKVKDGYARNFLIPSGKAKRATEANLQAFEARRAELEAKQAEILVDAQARGEKLNGVTITIAQKAGVDGRLFGSITNADIAEAIIASGVQVQKSDVRLPNGPFKAIGEYNVEVALHHDVVVEIQLVVNAEA</sequence>
<accession>C1DCR1</accession>
<protein>
    <recommendedName>
        <fullName evidence="1">Large ribosomal subunit protein bL9</fullName>
    </recommendedName>
    <alternativeName>
        <fullName evidence="2">50S ribosomal protein L9</fullName>
    </alternativeName>
</protein>
<keyword id="KW-1185">Reference proteome</keyword>
<keyword id="KW-0687">Ribonucleoprotein</keyword>
<keyword id="KW-0689">Ribosomal protein</keyword>
<keyword id="KW-0694">RNA-binding</keyword>
<keyword id="KW-0699">rRNA-binding</keyword>
<reference key="1">
    <citation type="journal article" date="2009" name="PLoS Genet.">
        <title>The complete genome and proteome of Laribacter hongkongensis reveal potential mechanisms for adaptations to different temperatures and habitats.</title>
        <authorList>
            <person name="Woo P.C.Y."/>
            <person name="Lau S.K.P."/>
            <person name="Tse H."/>
            <person name="Teng J.L.L."/>
            <person name="Curreem S.O."/>
            <person name="Tsang A.K.L."/>
            <person name="Fan R.Y.Y."/>
            <person name="Wong G.K.M."/>
            <person name="Huang Y."/>
            <person name="Loman N.J."/>
            <person name="Snyder L.A.S."/>
            <person name="Cai J.J."/>
            <person name="Huang J.-D."/>
            <person name="Mak W."/>
            <person name="Pallen M.J."/>
            <person name="Lok S."/>
            <person name="Yuen K.-Y."/>
        </authorList>
    </citation>
    <scope>NUCLEOTIDE SEQUENCE [LARGE SCALE GENOMIC DNA]</scope>
    <source>
        <strain>HLHK9</strain>
    </source>
</reference>
<dbReference type="EMBL" id="CP001154">
    <property type="protein sequence ID" value="ACO75680.1"/>
    <property type="molecule type" value="Genomic_DNA"/>
</dbReference>
<dbReference type="RefSeq" id="WP_012698144.1">
    <property type="nucleotide sequence ID" value="NC_012559.1"/>
</dbReference>
<dbReference type="SMR" id="C1DCR1"/>
<dbReference type="STRING" id="557598.LHK_02699"/>
<dbReference type="GeneID" id="75110379"/>
<dbReference type="KEGG" id="lhk:LHK_02699"/>
<dbReference type="eggNOG" id="COG0359">
    <property type="taxonomic scope" value="Bacteria"/>
</dbReference>
<dbReference type="HOGENOM" id="CLU_078938_4_1_4"/>
<dbReference type="Proteomes" id="UP000002010">
    <property type="component" value="Chromosome"/>
</dbReference>
<dbReference type="GO" id="GO:1990904">
    <property type="term" value="C:ribonucleoprotein complex"/>
    <property type="evidence" value="ECO:0007669"/>
    <property type="project" value="UniProtKB-KW"/>
</dbReference>
<dbReference type="GO" id="GO:0005840">
    <property type="term" value="C:ribosome"/>
    <property type="evidence" value="ECO:0007669"/>
    <property type="project" value="UniProtKB-KW"/>
</dbReference>
<dbReference type="GO" id="GO:0019843">
    <property type="term" value="F:rRNA binding"/>
    <property type="evidence" value="ECO:0007669"/>
    <property type="project" value="UniProtKB-UniRule"/>
</dbReference>
<dbReference type="GO" id="GO:0003735">
    <property type="term" value="F:structural constituent of ribosome"/>
    <property type="evidence" value="ECO:0007669"/>
    <property type="project" value="InterPro"/>
</dbReference>
<dbReference type="GO" id="GO:0006412">
    <property type="term" value="P:translation"/>
    <property type="evidence" value="ECO:0007669"/>
    <property type="project" value="UniProtKB-UniRule"/>
</dbReference>
<dbReference type="Gene3D" id="3.10.430.100">
    <property type="entry name" value="Ribosomal protein L9, C-terminal domain"/>
    <property type="match status" value="1"/>
</dbReference>
<dbReference type="Gene3D" id="3.40.5.10">
    <property type="entry name" value="Ribosomal protein L9, N-terminal domain"/>
    <property type="match status" value="1"/>
</dbReference>
<dbReference type="HAMAP" id="MF_00503">
    <property type="entry name" value="Ribosomal_bL9"/>
    <property type="match status" value="1"/>
</dbReference>
<dbReference type="InterPro" id="IPR000244">
    <property type="entry name" value="Ribosomal_bL9"/>
</dbReference>
<dbReference type="InterPro" id="IPR009027">
    <property type="entry name" value="Ribosomal_bL9/RNase_H1_N"/>
</dbReference>
<dbReference type="InterPro" id="IPR020594">
    <property type="entry name" value="Ribosomal_bL9_bac/chp"/>
</dbReference>
<dbReference type="InterPro" id="IPR020069">
    <property type="entry name" value="Ribosomal_bL9_C"/>
</dbReference>
<dbReference type="InterPro" id="IPR036791">
    <property type="entry name" value="Ribosomal_bL9_C_sf"/>
</dbReference>
<dbReference type="InterPro" id="IPR020070">
    <property type="entry name" value="Ribosomal_bL9_N"/>
</dbReference>
<dbReference type="InterPro" id="IPR036935">
    <property type="entry name" value="Ribosomal_bL9_N_sf"/>
</dbReference>
<dbReference type="NCBIfam" id="TIGR00158">
    <property type="entry name" value="L9"/>
    <property type="match status" value="1"/>
</dbReference>
<dbReference type="PANTHER" id="PTHR21368">
    <property type="entry name" value="50S RIBOSOMAL PROTEIN L9"/>
    <property type="match status" value="1"/>
</dbReference>
<dbReference type="Pfam" id="PF03948">
    <property type="entry name" value="Ribosomal_L9_C"/>
    <property type="match status" value="1"/>
</dbReference>
<dbReference type="Pfam" id="PF01281">
    <property type="entry name" value="Ribosomal_L9_N"/>
    <property type="match status" value="1"/>
</dbReference>
<dbReference type="SUPFAM" id="SSF55658">
    <property type="entry name" value="L9 N-domain-like"/>
    <property type="match status" value="1"/>
</dbReference>
<dbReference type="SUPFAM" id="SSF55653">
    <property type="entry name" value="Ribosomal protein L9 C-domain"/>
    <property type="match status" value="1"/>
</dbReference>
<dbReference type="PROSITE" id="PS00651">
    <property type="entry name" value="RIBOSOMAL_L9"/>
    <property type="match status" value="1"/>
</dbReference>
<proteinExistence type="inferred from homology"/>
<comment type="function">
    <text evidence="1">Binds to the 23S rRNA.</text>
</comment>
<comment type="similarity">
    <text evidence="1">Belongs to the bacterial ribosomal protein bL9 family.</text>
</comment>
<name>RL9_LARHH</name>
<organism>
    <name type="scientific">Laribacter hongkongensis (strain HLHK9)</name>
    <dbReference type="NCBI Taxonomy" id="557598"/>
    <lineage>
        <taxon>Bacteria</taxon>
        <taxon>Pseudomonadati</taxon>
        <taxon>Pseudomonadota</taxon>
        <taxon>Betaproteobacteria</taxon>
        <taxon>Neisseriales</taxon>
        <taxon>Aquaspirillaceae</taxon>
        <taxon>Laribacter</taxon>
    </lineage>
</organism>
<gene>
    <name evidence="1" type="primary">rplI</name>
    <name type="ordered locus">LHK_02699</name>
</gene>